<sequence length="135" mass="14745">MGGSKVYSLAEVSEHSQPNDCWLVIGGKVYDVTKFLDDHPGGADVLLSSTAKDATDDFEDIGHSSSARAMMDEMCVGDIDSSTIPTKTSYTPPKQPLYNQDKTPQFIIKLLQFLVPLIILGVAVGIRFYKKQSSD</sequence>
<accession>P49097</accession>
<dbReference type="EMBL" id="L22209">
    <property type="protein sequence ID" value="AAA62621.1"/>
    <property type="molecule type" value="mRNA"/>
</dbReference>
<dbReference type="PIR" id="T09946">
    <property type="entry name" value="T09946"/>
</dbReference>
<dbReference type="SMR" id="P49097"/>
<dbReference type="GO" id="GO:0005789">
    <property type="term" value="C:endoplasmic reticulum membrane"/>
    <property type="evidence" value="ECO:0007669"/>
    <property type="project" value="UniProtKB-SubCell"/>
</dbReference>
<dbReference type="GO" id="GO:0020037">
    <property type="term" value="F:heme binding"/>
    <property type="evidence" value="ECO:0007669"/>
    <property type="project" value="InterPro"/>
</dbReference>
<dbReference type="GO" id="GO:0046872">
    <property type="term" value="F:metal ion binding"/>
    <property type="evidence" value="ECO:0007669"/>
    <property type="project" value="UniProtKB-KW"/>
</dbReference>
<dbReference type="FunFam" id="3.10.120.10:FF:000002">
    <property type="entry name" value="Cytochrome b5 type B"/>
    <property type="match status" value="1"/>
</dbReference>
<dbReference type="Gene3D" id="3.10.120.10">
    <property type="entry name" value="Cytochrome b5-like heme/steroid binding domain"/>
    <property type="match status" value="1"/>
</dbReference>
<dbReference type="InterPro" id="IPR001199">
    <property type="entry name" value="Cyt_B5-like_heme/steroid-bd"/>
</dbReference>
<dbReference type="InterPro" id="IPR036400">
    <property type="entry name" value="Cyt_B5-like_heme/steroid_sf"/>
</dbReference>
<dbReference type="InterPro" id="IPR018506">
    <property type="entry name" value="Cyt_B5_heme-BS"/>
</dbReference>
<dbReference type="InterPro" id="IPR050668">
    <property type="entry name" value="Cytochrome_b5"/>
</dbReference>
<dbReference type="PANTHER" id="PTHR19359">
    <property type="entry name" value="CYTOCHROME B5"/>
    <property type="match status" value="1"/>
</dbReference>
<dbReference type="PANTHER" id="PTHR19359:SF129">
    <property type="entry name" value="CYTOCHROME B5 ISOFORM B"/>
    <property type="match status" value="1"/>
</dbReference>
<dbReference type="Pfam" id="PF00173">
    <property type="entry name" value="Cyt-b5"/>
    <property type="match status" value="1"/>
</dbReference>
<dbReference type="PRINTS" id="PR00363">
    <property type="entry name" value="CYTOCHROMEB5"/>
</dbReference>
<dbReference type="SMART" id="SM01117">
    <property type="entry name" value="Cyt-b5"/>
    <property type="match status" value="1"/>
</dbReference>
<dbReference type="SUPFAM" id="SSF55856">
    <property type="entry name" value="Cytochrome b5-like heme/steroid binding domain"/>
    <property type="match status" value="1"/>
</dbReference>
<dbReference type="PROSITE" id="PS00191">
    <property type="entry name" value="CYTOCHROME_B5_1"/>
    <property type="match status" value="1"/>
</dbReference>
<dbReference type="PROSITE" id="PS50255">
    <property type="entry name" value="CYTOCHROME_B5_2"/>
    <property type="match status" value="1"/>
</dbReference>
<protein>
    <recommendedName>
        <fullName>Cytochrome b5</fullName>
    </recommendedName>
</protein>
<reference key="1">
    <citation type="journal article" date="1994" name="Gene">
        <title>The cDNA sequence of cytochrome b5 associated with cytokinin-induced haustoria formation in Cuscuta reflexa.</title>
        <authorList>
            <person name="Subramaniam K."/>
            <person name="Mahadevan S."/>
        </authorList>
    </citation>
    <scope>NUCLEOTIDE SEQUENCE [MRNA]</scope>
</reference>
<evidence type="ECO:0000250" key="1"/>
<evidence type="ECO:0000255" key="2"/>
<evidence type="ECO:0000255" key="3">
    <source>
        <dbReference type="PROSITE-ProRule" id="PRU00279"/>
    </source>
</evidence>
<evidence type="ECO:0000305" key="4"/>
<comment type="function">
    <text>Membrane bound hemoprotein which function as an electron carrier for several membrane bound oxygenases.</text>
</comment>
<comment type="subcellular location">
    <subcellularLocation>
        <location evidence="1">Endoplasmic reticulum membrane</location>
        <topology evidence="1">Single-pass membrane protein</topology>
        <orientation evidence="1">Cytoplasmic side</orientation>
    </subcellularLocation>
    <subcellularLocation>
        <location evidence="1">Microsome membrane</location>
        <topology evidence="1">Single-pass membrane protein</topology>
        <orientation evidence="1">Cytoplasmic side</orientation>
    </subcellularLocation>
</comment>
<comment type="similarity">
    <text evidence="4">Belongs to the cytochrome b5 family.</text>
</comment>
<name>CYB5_CUSRE</name>
<feature type="chain" id="PRO_0000166024" description="Cytochrome b5">
    <location>
        <begin position="1"/>
        <end position="135"/>
    </location>
</feature>
<feature type="transmembrane region" description="Helical" evidence="2">
    <location>
        <begin position="106"/>
        <end position="126"/>
    </location>
</feature>
<feature type="domain" description="Cytochrome b5 heme-binding" evidence="3">
    <location>
        <begin position="4"/>
        <end position="80"/>
    </location>
</feature>
<feature type="binding site" description="axial binding residue" evidence="3">
    <location>
        <position position="39"/>
    </location>
    <ligand>
        <name>heme</name>
        <dbReference type="ChEBI" id="CHEBI:30413"/>
    </ligand>
    <ligandPart>
        <name>Fe</name>
        <dbReference type="ChEBI" id="CHEBI:18248"/>
    </ligandPart>
</feature>
<feature type="binding site" description="axial binding residue" evidence="3">
    <location>
        <position position="63"/>
    </location>
    <ligand>
        <name>heme</name>
        <dbReference type="ChEBI" id="CHEBI:30413"/>
    </ligand>
    <ligandPart>
        <name>Fe</name>
        <dbReference type="ChEBI" id="CHEBI:18248"/>
    </ligandPart>
</feature>
<proteinExistence type="evidence at transcript level"/>
<organism>
    <name type="scientific">Cuscuta reflexa</name>
    <name type="common">Southern Asian dodder</name>
    <dbReference type="NCBI Taxonomy" id="4129"/>
    <lineage>
        <taxon>Eukaryota</taxon>
        <taxon>Viridiplantae</taxon>
        <taxon>Streptophyta</taxon>
        <taxon>Embryophyta</taxon>
        <taxon>Tracheophyta</taxon>
        <taxon>Spermatophyta</taxon>
        <taxon>Magnoliopsida</taxon>
        <taxon>eudicotyledons</taxon>
        <taxon>Gunneridae</taxon>
        <taxon>Pentapetalae</taxon>
        <taxon>asterids</taxon>
        <taxon>lamiids</taxon>
        <taxon>Solanales</taxon>
        <taxon>Convolvulaceae</taxon>
        <taxon>Cuscuteae</taxon>
        <taxon>Cuscuta</taxon>
        <taxon>Cuscuta subgen. Monogynella</taxon>
    </lineage>
</organism>
<keyword id="KW-0249">Electron transport</keyword>
<keyword id="KW-0256">Endoplasmic reticulum</keyword>
<keyword id="KW-0349">Heme</keyword>
<keyword id="KW-0408">Iron</keyword>
<keyword id="KW-0472">Membrane</keyword>
<keyword id="KW-0479">Metal-binding</keyword>
<keyword id="KW-0492">Microsome</keyword>
<keyword id="KW-0812">Transmembrane</keyword>
<keyword id="KW-1133">Transmembrane helix</keyword>
<keyword id="KW-0813">Transport</keyword>